<accession>P62812</accession>
<accession>P18504</accession>
<dbReference type="EMBL" id="M86566">
    <property type="protein sequence ID" value="AAB59634.1"/>
    <property type="molecule type" value="mRNA"/>
</dbReference>
<dbReference type="EMBL" id="M63436">
    <property type="protein sequence ID" value="AAA37654.1"/>
    <property type="molecule type" value="mRNA"/>
</dbReference>
<dbReference type="EMBL" id="X61430">
    <property type="protein sequence ID" value="CAA43672.1"/>
    <property type="molecule type" value="mRNA"/>
</dbReference>
<dbReference type="CCDS" id="CCDS24553.1"/>
<dbReference type="PIR" id="A39062">
    <property type="entry name" value="A39062"/>
</dbReference>
<dbReference type="RefSeq" id="NP_001345964.1">
    <property type="nucleotide sequence ID" value="NM_001359035.1"/>
</dbReference>
<dbReference type="RefSeq" id="NP_034380.1">
    <property type="nucleotide sequence ID" value="NM_010250.5"/>
</dbReference>
<dbReference type="RefSeq" id="XP_006532259.1">
    <property type="nucleotide sequence ID" value="XM_006532196.3"/>
</dbReference>
<dbReference type="RefSeq" id="XP_017169748.1">
    <property type="nucleotide sequence ID" value="XM_017314259.1"/>
</dbReference>
<dbReference type="RefSeq" id="XP_017169749.1">
    <property type="nucleotide sequence ID" value="XM_017314260.1"/>
</dbReference>
<dbReference type="PDB" id="5OSA">
    <property type="method" value="X-ray"/>
    <property type="resolution" value="2.75 A"/>
    <property type="chains" value="A/B/C/D/E=250-338, A/B/C/D/E=417-455"/>
</dbReference>
<dbReference type="PDB" id="5OSB">
    <property type="method" value="X-ray"/>
    <property type="resolution" value="3.80 A"/>
    <property type="chains" value="A/B/C/D/E=250-338, A/B/C/D/E=417-455"/>
</dbReference>
<dbReference type="PDB" id="5OSC">
    <property type="method" value="X-ray"/>
    <property type="resolution" value="3.10 A"/>
    <property type="chains" value="A/B/C/D/E=250-338, A/B/C/D/E=417-455"/>
</dbReference>
<dbReference type="PDB" id="8FOI">
    <property type="method" value="EM"/>
    <property type="resolution" value="2.50 A"/>
    <property type="chains" value="A/C=1-455"/>
</dbReference>
<dbReference type="PDB" id="8G4N">
    <property type="method" value="EM"/>
    <property type="resolution" value="2.67 A"/>
    <property type="chains" value="A/C=1-455"/>
</dbReference>
<dbReference type="PDB" id="8G4O">
    <property type="method" value="EM"/>
    <property type="resolution" value="3.06 A"/>
    <property type="chains" value="A/C=1-455"/>
</dbReference>
<dbReference type="PDB" id="8G4X">
    <property type="method" value="EM"/>
    <property type="resolution" value="2.56 A"/>
    <property type="chains" value="A=1-455"/>
</dbReference>
<dbReference type="PDB" id="8G5F">
    <property type="method" value="EM"/>
    <property type="resolution" value="2.64 A"/>
    <property type="chains" value="C=1-455"/>
</dbReference>
<dbReference type="PDB" id="8G5G">
    <property type="method" value="EM"/>
    <property type="resolution" value="2.94 A"/>
    <property type="chains" value="A=1-455"/>
</dbReference>
<dbReference type="PDB" id="8G5H">
    <property type="method" value="EM"/>
    <property type="resolution" value="2.89 A"/>
    <property type="chains" value="C=1-455"/>
</dbReference>
<dbReference type="PDBsum" id="5OSA"/>
<dbReference type="PDBsum" id="5OSB"/>
<dbReference type="PDBsum" id="5OSC"/>
<dbReference type="PDBsum" id="8FOI"/>
<dbReference type="PDBsum" id="8G4N"/>
<dbReference type="PDBsum" id="8G4O"/>
<dbReference type="PDBsum" id="8G4X"/>
<dbReference type="PDBsum" id="8G5F"/>
<dbReference type="PDBsum" id="8G5G"/>
<dbReference type="PDBsum" id="8G5H"/>
<dbReference type="EMDB" id="EMD-29350"/>
<dbReference type="EMDB" id="EMD-29727"/>
<dbReference type="EMDB" id="EMD-29728"/>
<dbReference type="EMDB" id="EMD-29733"/>
<dbReference type="EMDB" id="EMD-29741"/>
<dbReference type="EMDB" id="EMD-29742"/>
<dbReference type="EMDB" id="EMD-29743"/>
<dbReference type="SMR" id="P62812"/>
<dbReference type="BioGRID" id="199797">
    <property type="interactions" value="33"/>
</dbReference>
<dbReference type="ComplexPortal" id="CPX-2979">
    <property type="entry name" value="GABA-A receptor, alpha1-beta2-gamma2"/>
</dbReference>
<dbReference type="ComplexPortal" id="CPX-2983">
    <property type="entry name" value="GABA-A receptor, alpha1-beta3-gamma2"/>
</dbReference>
<dbReference type="DIP" id="DIP-32219N"/>
<dbReference type="FunCoup" id="P62812">
    <property type="interactions" value="692"/>
</dbReference>
<dbReference type="IntAct" id="P62812">
    <property type="interactions" value="1"/>
</dbReference>
<dbReference type="STRING" id="10090.ENSMUSP00000020707"/>
<dbReference type="BindingDB" id="P62812"/>
<dbReference type="ChEMBL" id="CHEMBL3139"/>
<dbReference type="DrugCentral" id="P62812"/>
<dbReference type="TCDB" id="1.A.9.5.16">
    <property type="family name" value="the neurotransmitter receptor, cys loop, ligand-gated ion channel (lic) family"/>
</dbReference>
<dbReference type="GlyConnect" id="2320">
    <property type="glycosylation" value="7 N-Linked glycans (1 site)"/>
</dbReference>
<dbReference type="GlyCosmos" id="P62812">
    <property type="glycosylation" value="2 sites, 7 glycans"/>
</dbReference>
<dbReference type="GlyGen" id="P62812">
    <property type="glycosylation" value="3 sites, 8 N-linked glycans (1 site), 1 O-linked glycan (1 site)"/>
</dbReference>
<dbReference type="iPTMnet" id="P62812"/>
<dbReference type="PhosphoSitePlus" id="P62812"/>
<dbReference type="SwissPalm" id="P62812"/>
<dbReference type="PaxDb" id="10090-ENSMUSP00000020707"/>
<dbReference type="PeptideAtlas" id="P62812"/>
<dbReference type="ProteomicsDB" id="272940"/>
<dbReference type="ABCD" id="P62812">
    <property type="antibodies" value="2 sequenced antibodies"/>
</dbReference>
<dbReference type="Antibodypedia" id="4533">
    <property type="antibodies" value="499 antibodies from 44 providers"/>
</dbReference>
<dbReference type="DNASU" id="14394"/>
<dbReference type="Ensembl" id="ENSMUST00000020707.12">
    <property type="protein sequence ID" value="ENSMUSP00000020707.6"/>
    <property type="gene ID" value="ENSMUSG00000010803.14"/>
</dbReference>
<dbReference type="Ensembl" id="ENSMUST00000205546.2">
    <property type="protein sequence ID" value="ENSMUSP00000146133.2"/>
    <property type="gene ID" value="ENSMUSG00000010803.14"/>
</dbReference>
<dbReference type="GeneID" id="14394"/>
<dbReference type="KEGG" id="mmu:14394"/>
<dbReference type="UCSC" id="uc007imf.2">
    <property type="organism name" value="mouse"/>
</dbReference>
<dbReference type="AGR" id="MGI:95613"/>
<dbReference type="CTD" id="2554"/>
<dbReference type="MGI" id="MGI:95613">
    <property type="gene designation" value="Gabra1"/>
</dbReference>
<dbReference type="VEuPathDB" id="HostDB:ENSMUSG00000010803"/>
<dbReference type="eggNOG" id="KOG3642">
    <property type="taxonomic scope" value="Eukaryota"/>
</dbReference>
<dbReference type="GeneTree" id="ENSGT00940000159136"/>
<dbReference type="HOGENOM" id="CLU_010920_2_1_1"/>
<dbReference type="InParanoid" id="P62812"/>
<dbReference type="OMA" id="YLWAYLF"/>
<dbReference type="OrthoDB" id="203862at2759"/>
<dbReference type="PhylomeDB" id="P62812"/>
<dbReference type="TreeFam" id="TF315453"/>
<dbReference type="Reactome" id="R-MMU-977443">
    <property type="pathway name" value="GABA receptor activation"/>
</dbReference>
<dbReference type="BioGRID-ORCS" id="14394">
    <property type="hits" value="2 hits in 77 CRISPR screens"/>
</dbReference>
<dbReference type="CD-CODE" id="CE726F99">
    <property type="entry name" value="Postsynaptic density"/>
</dbReference>
<dbReference type="ChiTaRS" id="Gabra1">
    <property type="organism name" value="mouse"/>
</dbReference>
<dbReference type="PRO" id="PR:P62812"/>
<dbReference type="Proteomes" id="UP000000589">
    <property type="component" value="Chromosome 11"/>
</dbReference>
<dbReference type="RNAct" id="P62812">
    <property type="molecule type" value="protein"/>
</dbReference>
<dbReference type="Bgee" id="ENSMUSG00000010803">
    <property type="expression patterns" value="Expressed in cerebellum lobe and 172 other cell types or tissues"/>
</dbReference>
<dbReference type="ExpressionAtlas" id="P62812">
    <property type="expression patterns" value="baseline and differential"/>
</dbReference>
<dbReference type="GO" id="GO:0034707">
    <property type="term" value="C:chloride channel complex"/>
    <property type="evidence" value="ECO:0007669"/>
    <property type="project" value="UniProtKB-KW"/>
</dbReference>
<dbReference type="GO" id="GO:0030659">
    <property type="term" value="C:cytoplasmic vesicle membrane"/>
    <property type="evidence" value="ECO:0007669"/>
    <property type="project" value="UniProtKB-SubCell"/>
</dbReference>
<dbReference type="GO" id="GO:0043197">
    <property type="term" value="C:dendritic spine"/>
    <property type="evidence" value="ECO:0007669"/>
    <property type="project" value="Ensembl"/>
</dbReference>
<dbReference type="GO" id="GO:1902711">
    <property type="term" value="C:GABA-A receptor complex"/>
    <property type="evidence" value="ECO:0000250"/>
    <property type="project" value="UniProtKB"/>
</dbReference>
<dbReference type="GO" id="GO:0098982">
    <property type="term" value="C:GABA-ergic synapse"/>
    <property type="evidence" value="ECO:0000314"/>
    <property type="project" value="SynGO"/>
</dbReference>
<dbReference type="GO" id="GO:0005886">
    <property type="term" value="C:plasma membrane"/>
    <property type="evidence" value="ECO:0000314"/>
    <property type="project" value="UniProtKB"/>
</dbReference>
<dbReference type="GO" id="GO:0099634">
    <property type="term" value="C:postsynaptic specialization membrane"/>
    <property type="evidence" value="ECO:0000250"/>
    <property type="project" value="UniProtKB"/>
</dbReference>
<dbReference type="GO" id="GO:0004890">
    <property type="term" value="F:GABA-A receptor activity"/>
    <property type="evidence" value="ECO:0000250"/>
    <property type="project" value="UniProtKB"/>
</dbReference>
<dbReference type="GO" id="GO:0022851">
    <property type="term" value="F:GABA-gated chloride ion channel activity"/>
    <property type="evidence" value="ECO:0007669"/>
    <property type="project" value="Ensembl"/>
</dbReference>
<dbReference type="GO" id="GO:1904315">
    <property type="term" value="F:transmitter-gated monoatomic ion channel activity involved in regulation of postsynaptic membrane potential"/>
    <property type="evidence" value="ECO:0000314"/>
    <property type="project" value="SynGO"/>
</dbReference>
<dbReference type="GO" id="GO:1902476">
    <property type="term" value="P:chloride transmembrane transport"/>
    <property type="evidence" value="ECO:0000266"/>
    <property type="project" value="ComplexPortal"/>
</dbReference>
<dbReference type="GO" id="GO:0007214">
    <property type="term" value="P:gamma-aminobutyric acid signaling pathway"/>
    <property type="evidence" value="ECO:0000266"/>
    <property type="project" value="ComplexPortal"/>
</dbReference>
<dbReference type="GO" id="GO:1904862">
    <property type="term" value="P:inhibitory synapse assembly"/>
    <property type="evidence" value="ECO:0000314"/>
    <property type="project" value="UniProtKB"/>
</dbReference>
<dbReference type="GO" id="GO:0051932">
    <property type="term" value="P:synaptic transmission, GABAergic"/>
    <property type="evidence" value="ECO:0000303"/>
    <property type="project" value="ComplexPortal"/>
</dbReference>
<dbReference type="CDD" id="cd19034">
    <property type="entry name" value="LGIC_ECD_GABAAR_A1"/>
    <property type="match status" value="1"/>
</dbReference>
<dbReference type="CDD" id="cd19052">
    <property type="entry name" value="LGIC_TM_GABAAR_alpha"/>
    <property type="match status" value="1"/>
</dbReference>
<dbReference type="FunFam" id="2.70.170.10:FF:000001">
    <property type="entry name" value="Gamma-aminobutyric acid A receptor subunit alpha-2"/>
    <property type="match status" value="1"/>
</dbReference>
<dbReference type="FunFam" id="1.20.58.390:FF:000002">
    <property type="entry name" value="Putative gamma-aminobutyric acid receptor subunit alpha-5"/>
    <property type="match status" value="1"/>
</dbReference>
<dbReference type="Gene3D" id="2.70.170.10">
    <property type="entry name" value="Neurotransmitter-gated ion-channel ligand-binding domain"/>
    <property type="match status" value="1"/>
</dbReference>
<dbReference type="Gene3D" id="1.20.58.390">
    <property type="entry name" value="Neurotransmitter-gated ion-channel transmembrane domain"/>
    <property type="match status" value="1"/>
</dbReference>
<dbReference type="InterPro" id="IPR006028">
    <property type="entry name" value="GABAA/Glycine_rcpt"/>
</dbReference>
<dbReference type="InterPro" id="IPR001390">
    <property type="entry name" value="GABAAa_rcpt"/>
</dbReference>
<dbReference type="InterPro" id="IPR005431">
    <property type="entry name" value="GABBAa1_rcpt"/>
</dbReference>
<dbReference type="InterPro" id="IPR047024">
    <property type="entry name" value="Gabra-1-6_TM"/>
</dbReference>
<dbReference type="InterPro" id="IPR047079">
    <property type="entry name" value="GABRA1_ECD"/>
</dbReference>
<dbReference type="InterPro" id="IPR006202">
    <property type="entry name" value="Neur_chan_lig-bd"/>
</dbReference>
<dbReference type="InterPro" id="IPR036734">
    <property type="entry name" value="Neur_chan_lig-bd_sf"/>
</dbReference>
<dbReference type="InterPro" id="IPR006201">
    <property type="entry name" value="Neur_channel"/>
</dbReference>
<dbReference type="InterPro" id="IPR036719">
    <property type="entry name" value="Neuro-gated_channel_TM_sf"/>
</dbReference>
<dbReference type="InterPro" id="IPR038050">
    <property type="entry name" value="Neuro_actylchol_rec"/>
</dbReference>
<dbReference type="InterPro" id="IPR006029">
    <property type="entry name" value="Neurotrans-gated_channel_TM"/>
</dbReference>
<dbReference type="InterPro" id="IPR018000">
    <property type="entry name" value="Neurotransmitter_ion_chnl_CS"/>
</dbReference>
<dbReference type="NCBIfam" id="TIGR00860">
    <property type="entry name" value="LIC"/>
    <property type="match status" value="1"/>
</dbReference>
<dbReference type="PANTHER" id="PTHR18945">
    <property type="entry name" value="NEUROTRANSMITTER GATED ION CHANNEL"/>
    <property type="match status" value="1"/>
</dbReference>
<dbReference type="Pfam" id="PF02931">
    <property type="entry name" value="Neur_chan_LBD"/>
    <property type="match status" value="1"/>
</dbReference>
<dbReference type="Pfam" id="PF02932">
    <property type="entry name" value="Neur_chan_memb"/>
    <property type="match status" value="2"/>
</dbReference>
<dbReference type="PRINTS" id="PR01079">
    <property type="entry name" value="GABAARALPHA"/>
</dbReference>
<dbReference type="PRINTS" id="PR01614">
    <property type="entry name" value="GABAARALPHA1"/>
</dbReference>
<dbReference type="PRINTS" id="PR00253">
    <property type="entry name" value="GABAARECEPTR"/>
</dbReference>
<dbReference type="PRINTS" id="PR00252">
    <property type="entry name" value="NRIONCHANNEL"/>
</dbReference>
<dbReference type="SUPFAM" id="SSF90112">
    <property type="entry name" value="Neurotransmitter-gated ion-channel transmembrane pore"/>
    <property type="match status" value="1"/>
</dbReference>
<dbReference type="SUPFAM" id="SSF63712">
    <property type="entry name" value="Nicotinic receptor ligand binding domain-like"/>
    <property type="match status" value="1"/>
</dbReference>
<dbReference type="PROSITE" id="PS00236">
    <property type="entry name" value="NEUROTR_ION_CHANNEL"/>
    <property type="match status" value="1"/>
</dbReference>
<evidence type="ECO:0000250" key="1">
    <source>
        <dbReference type="UniProtKB" id="P08219"/>
    </source>
</evidence>
<evidence type="ECO:0000250" key="2">
    <source>
        <dbReference type="UniProtKB" id="P14867"/>
    </source>
</evidence>
<evidence type="ECO:0000250" key="3">
    <source>
        <dbReference type="UniProtKB" id="P62813"/>
    </source>
</evidence>
<evidence type="ECO:0000255" key="4"/>
<evidence type="ECO:0000269" key="5">
    <source>
    </source>
</evidence>
<evidence type="ECO:0000269" key="6">
    <source>
    </source>
</evidence>
<evidence type="ECO:0000269" key="7">
    <source>
    </source>
</evidence>
<evidence type="ECO:0000269" key="8">
    <source>
    </source>
</evidence>
<evidence type="ECO:0000269" key="9">
    <source>
    </source>
</evidence>
<evidence type="ECO:0000269" key="10">
    <source>
    </source>
</evidence>
<evidence type="ECO:0000269" key="11">
    <source>
    </source>
</evidence>
<evidence type="ECO:0000303" key="12">
    <source>
    </source>
</evidence>
<evidence type="ECO:0000303" key="13">
    <source>
    </source>
</evidence>
<evidence type="ECO:0000305" key="14"/>
<evidence type="ECO:0000305" key="15">
    <source>
    </source>
</evidence>
<evidence type="ECO:0000312" key="16">
    <source>
        <dbReference type="MGI" id="MGI:95613"/>
    </source>
</evidence>
<evidence type="ECO:0007829" key="17">
    <source>
        <dbReference type="PDB" id="5OSA"/>
    </source>
</evidence>
<evidence type="ECO:0007829" key="18">
    <source>
        <dbReference type="PDB" id="8G4O"/>
    </source>
</evidence>
<sequence length="455" mass="51754">MKKSRGLSDYLWAWTLILSTLSGRSYGQPSQDELKDNTTVFTRILDRLLDGYDNRLRPGLGERVTEVKTDIFVTSFGPVSDHDMEYTIDVFFRQSWKDERLKFKGPMTVLRLNNLMASKIWTPDTFFHNGKKSVAHNMTMPNKLLRITEDGTLLYTMRLTVRAECPMHLEDFPMDAHACPLKFGSYAYTRAEVVYEWTREPARSVVVAEDGSRLNQYDLLGQTVDSGIVQSSTGEYVVMTTHFHLKRKIGYFVIQTYLPCIMTVILSQVSFWLNRESVPARTVFGVTTVLTMTTLSISARNSLPKVAYATAMDWFIAVCYAFVFSALIEFATVNYFTKRGYAWDGKSVVPEKPKKVKDPLIKKNNTYAPTATSYTPNLARGDPGLATIAKSATIEPKEVKPETKPPEPKKTFNSVSKIDRLSRIAFPLLFGIFNLVYWATYLNREPQLKAPTPHQ</sequence>
<comment type="function">
    <text evidence="1 3 6 7 8 10">Alpha subunit of the heteropentameric ligand-gated chloride channel gated by Gamma-aminobutyric acid (GABA), a major inhibitory neurotransmitter in the brain. GABA-gated chloride channels, also named GABA(A) receptors (GABAAR), consist of five subunits arranged around a central pore and contain GABA active binding site(s) located at the alpha and beta subunit interface(s) (PubMed:27129275). When activated by GABA, GABAARs selectively allow the flow of chloride anions across the cell membrane down their electrochemical gradient (By similarity). Alpha-1/GABRA1-containing GABAARs are largely synaptic (By similarity). Chloride influx into the postsynaptic neuron following GABAAR opening decreases the neuron ability to generate a new action potential, thereby reducing nerve transmission (By similarity). GABAARs containing alpha-1 and beta-2 or -3 subunits exhibit synaptogenic activity; the gamma-2 subunit being necessary but not sufficient to induce rapid synaptic contacts formation (PubMed:27129275). GABAARs function also as histamine receptor where histamine binds at the interface of two neighboring beta subunits and potentiates GABA response (By similarity). GABAARs containing alpha, beta and epsilon subunits also permit spontaneous chloride channel activity while preserving the structural information required for GABA-gated openings (By similarity). Alpha-1-mediated plasticity in the orbitofrontal cortex regulates context-dependent action selection (PubMed:25348603). Together with rho subunits, may also control neuronal and glial GABAergic transmission in the cerebellum (PubMed:16945976, PubMed:25422464).</text>
</comment>
<comment type="catalytic activity">
    <reaction evidence="1">
        <text>chloride(in) = chloride(out)</text>
        <dbReference type="Rhea" id="RHEA:29823"/>
        <dbReference type="ChEBI" id="CHEBI:17996"/>
    </reaction>
</comment>
<comment type="activity regulation">
    <text evidence="2 3">Allosterically activated by benzodiazepines, the neuroanesthetic alphaxalone and pentobarbital (By similarity). Inhibited by the antagonist bicuculline (By similarity). Potentiated by histamine (By similarity).</text>
</comment>
<comment type="subunit">
    <text evidence="2 3 5 8 11">Heteropentamer, formed by a combination of alpha (GABRA1-6), beta (GABRB1-3), gamma (GABRG1-3), delta (GABRD), epsilon (GABRE), rho (GABRR1-3), pi (GABRP) and theta (GABRQ) subunits, each subunit exhibiting distinct physiological and pharmacological properties (PubMed:25422464). Interacts with UBQLN1 (By similarity). Interacts with TRAK1 (PubMed:16380713). Interacts with KIF21B (By similarity). Identified in a complex of 720 kDa composed of LHFPL4, NLGN2, GABRA1, GABRB2, GABRG2 and GABRB3 (By similarity). Interacts with LHFPL4 (By similarity). Interacts with NLGN2 (By similarity). Interacts with SHISA7; interaction leads to the regulation of GABA(A) receptor trafficking, channel deactivation kinetics and pharmacology (PubMed:31601770).</text>
</comment>
<comment type="subcellular location">
    <subcellularLocation>
        <location evidence="15">Postsynaptic cell membrane</location>
        <topology evidence="2">Multi-pass membrane protein</topology>
    </subcellularLocation>
    <subcellularLocation>
        <location evidence="5 8 9">Cell membrane</location>
        <topology evidence="2">Multi-pass membrane protein</topology>
    </subcellularLocation>
    <subcellularLocation>
        <location evidence="3">Cytoplasmic vesicle membrane</location>
    </subcellularLocation>
    <text evidence="6 8">Located at the plasma membrane of astrocytes (PubMed:25422464). Located in the somatic, proximal and distal dendritic regions of cerebellar Purkinje cells and in the molecular layer (PubMed:16945976).</text>
</comment>
<comment type="tissue specificity">
    <text evidence="6 8">Expressed in the cerebellum.</text>
</comment>
<comment type="domain">
    <text evidence="10">The extracellular domain contributes to synaptic contact formation.</text>
</comment>
<comment type="domain">
    <text evidence="2">The GABA-binding pockets are located at the interface between neighboring alpha and beta subunits.</text>
</comment>
<comment type="domain">
    <text evidence="2">GABAARs subunits share a common topological structure: a peptide sequence made up of a long extracellular N-terminal, four transmembrane domains, intracellular or cytoplasmic domain located between the third and the fourth transmembrane domains.</text>
</comment>
<comment type="PTM">
    <text evidence="10">Glycosylated.</text>
</comment>
<comment type="disruption phenotype">
    <text evidence="7">Gene knockdown in orbitofrontal prefrontal cortex results in an inability of mice to select actions based on their consequences, developing instead habit-like behavioral inflexibility.</text>
</comment>
<comment type="similarity">
    <text evidence="14">Belongs to the ligand-gated ion channel (TC 1.A.9) family. Gamma-aminobutyric acid receptor (TC 1.A.9.5) subfamily. GABRA1 sub-subfamily.</text>
</comment>
<protein>
    <recommendedName>
        <fullName>Gamma-aminobutyric acid receptor subunit alpha-1</fullName>
    </recommendedName>
    <alternativeName>
        <fullName evidence="12">GABA(A) receptor subunit alpha-1</fullName>
        <shortName evidence="13">GABAAR subunit alpha-1</shortName>
    </alternativeName>
</protein>
<organism>
    <name type="scientific">Mus musculus</name>
    <name type="common">Mouse</name>
    <dbReference type="NCBI Taxonomy" id="10090"/>
    <lineage>
        <taxon>Eukaryota</taxon>
        <taxon>Metazoa</taxon>
        <taxon>Chordata</taxon>
        <taxon>Craniata</taxon>
        <taxon>Vertebrata</taxon>
        <taxon>Euteleostomi</taxon>
        <taxon>Mammalia</taxon>
        <taxon>Eutheria</taxon>
        <taxon>Euarchontoglires</taxon>
        <taxon>Glires</taxon>
        <taxon>Rodentia</taxon>
        <taxon>Myomorpha</taxon>
        <taxon>Muroidea</taxon>
        <taxon>Muridae</taxon>
        <taxon>Murinae</taxon>
        <taxon>Mus</taxon>
        <taxon>Mus</taxon>
    </lineage>
</organism>
<name>GBRA1_MOUSE</name>
<proteinExistence type="evidence at protein level"/>
<reference key="1">
    <citation type="journal article" date="1992" name="J. Mol. Neurosci.">
        <title>The alpha 1, alpha 2, and alpha 3 subunits of GABAA receptors: comparison in seizure-prone and -resistant mice and during development.</title>
        <authorList>
            <person name="Wang J.B."/>
            <person name="Kofuji P."/>
            <person name="Fernando J.C."/>
            <person name="Moss S.J."/>
            <person name="Huganir R.L."/>
            <person name="Burt D.R."/>
        </authorList>
    </citation>
    <scope>NUCLEOTIDE SEQUENCE [MRNA]</scope>
    <source>
        <strain>C57BL/6J</strain>
        <strain>DBA/2J</strain>
        <tissue>Brain</tissue>
    </source>
</reference>
<reference key="2">
    <citation type="journal article" date="1991" name="Genomics">
        <title>The cDNA sequence and chromosomal location of the murine GABAA alpha 1 receptor gene.</title>
        <authorList>
            <person name="Keir W.J."/>
            <person name="Kozak C.A."/>
            <person name="Chakraborti A."/>
            <person name="Deitrich R.A."/>
            <person name="Sikela J.M."/>
        </authorList>
    </citation>
    <scope>NUCLEOTIDE SEQUENCE [MRNA]</scope>
</reference>
<reference key="3">
    <citation type="journal article" date="1990" name="Eur. J. Neurosci.">
        <title>A collection of cDNA clones with specific expression patterns in mouse brain.</title>
        <authorList>
            <person name="Kato K."/>
        </authorList>
    </citation>
    <scope>NUCLEOTIDE SEQUENCE [LARGE SCALE MRNA]</scope>
    <source>
        <strain>BALB/cJ</strain>
    </source>
</reference>
<reference key="4">
    <citation type="journal article" date="2006" name="J. Physiol. (Lond.)">
        <title>Evidence that GABA rho subunits contribute to functional ionotropic GABA receptors in mouse cerebellar Purkinje cells.</title>
        <authorList>
            <person name="Harvey V.L."/>
            <person name="Duguid I.C."/>
            <person name="Krasel C."/>
            <person name="Stephens G.J."/>
        </authorList>
    </citation>
    <scope>FUNCTION</scope>
    <scope>SUBCELLULAR LOCATION</scope>
    <scope>TISSUE SPECIFICITY</scope>
</reference>
<reference key="5">
    <citation type="journal article" date="2006" name="Nat. Genet.">
        <title>Trak1 mutation disrupts GABA(A) receptor homeostasis in hypertonic mice.</title>
        <authorList>
            <person name="Gilbert S.L."/>
            <person name="Zhang L."/>
            <person name="Forster M.L."/>
            <person name="Anderson J.R."/>
            <person name="Iwase T."/>
            <person name="Soliven B."/>
            <person name="Donahue L.R."/>
            <person name="Sweet H.O."/>
            <person name="Bronson R.T."/>
            <person name="Davisson M.T."/>
            <person name="Wollmann R.L."/>
            <person name="Lahn B.T."/>
        </authorList>
    </citation>
    <scope>INTERACTION WITH TRAK1</scope>
    <scope>SUBCELLULAR LOCATION</scope>
</reference>
<reference key="6">
    <citation type="journal article" date="2010" name="Cell">
        <title>A tissue-specific atlas of mouse protein phosphorylation and expression.</title>
        <authorList>
            <person name="Huttlin E.L."/>
            <person name="Jedrychowski M.P."/>
            <person name="Elias J.E."/>
            <person name="Goswami T."/>
            <person name="Rad R."/>
            <person name="Beausoleil S.A."/>
            <person name="Villen J."/>
            <person name="Haas W."/>
            <person name="Sowa M.E."/>
            <person name="Gygi S.P."/>
        </authorList>
    </citation>
    <scope>IDENTIFICATION BY MASS SPECTROMETRY [LARGE SCALE ANALYSIS]</scope>
    <source>
        <tissue>Brain</tissue>
    </source>
</reference>
<reference key="7">
    <citation type="journal article" date="2014" name="Proc. Natl. Acad. Sci. U.S.A.">
        <title>GABArho subunits confer a bicuculline-insensitive component to GFAP+ cells of cerebellum.</title>
        <authorList>
            <person name="Petriz A."/>
            <person name="Reyes-Haro D."/>
            <person name="Gonzalez-Gonzalez M.A."/>
            <person name="Miledi R."/>
            <person name="Martinez-Torres A."/>
        </authorList>
    </citation>
    <scope>FUNCTION</scope>
    <scope>INTERACTION WITH GBRR1</scope>
    <scope>SUBCELLULAR LOCATION</scope>
    <scope>TISSUE SPECIFICITY</scope>
</reference>
<reference key="8">
    <citation type="journal article" date="2015" name="Neuropsychopharmacology">
        <title>GABAAalpha1-mediated plasticity in the orbitofrontal cortex regulates context-dependent action selection.</title>
        <authorList>
            <person name="Swanson A.M."/>
            <person name="Allen A.G."/>
            <person name="Shapiro L.P."/>
            <person name="Gourley S.L."/>
        </authorList>
    </citation>
    <scope>FUNCTION</scope>
    <scope>DISRUPTION PHENOTYPE</scope>
</reference>
<reference key="9">
    <citation type="journal article" date="2015" name="Structure">
        <title>The LisH motif of muskelin is crucial for oligomerization and governs intracellular localization.</title>
        <authorList>
            <person name="Delto C.F."/>
            <person name="Heisler F.F."/>
            <person name="Kuper J."/>
            <person name="Sander B."/>
            <person name="Kneussel M."/>
            <person name="Schindelin H."/>
        </authorList>
    </citation>
    <scope>SUBCELLULAR LOCATION</scope>
</reference>
<reference key="10">
    <citation type="journal article" date="2016" name="J. Biol. Chem.">
        <title>Gamma-aminobutyric acid type A (GABAA) receptor subunits play a direct structural role in synaptic contact formation via their N-terminal extracellular domains.</title>
        <authorList>
            <person name="Brown L.E."/>
            <person name="Nicholson M.W."/>
            <person name="Arama J.E."/>
            <person name="Mercer A."/>
            <person name="Thomson A.M."/>
            <person name="Jovanovic J.N."/>
        </authorList>
    </citation>
    <scope>FUNCTION</scope>
    <scope>GLYCOSYLATION</scope>
    <scope>DOMAIN EXTRACELLULAR</scope>
</reference>
<reference key="11">
    <citation type="journal article" date="2019" name="Science">
        <title>Shisa7 is a GABAA receptor auxiliary subunit controlling benzodiazepine actions.</title>
        <authorList>
            <person name="Han W."/>
            <person name="Li J."/>
            <person name="Pelkey K.A."/>
            <person name="Pandey S."/>
            <person name="Chen X."/>
            <person name="Wang Y.X."/>
            <person name="Wu K."/>
            <person name="Ge L."/>
            <person name="Li T."/>
            <person name="Castellano D."/>
            <person name="Liu C."/>
            <person name="Wu L.G."/>
            <person name="Petralia R.S."/>
            <person name="Lynch J.W."/>
            <person name="McBain C.J."/>
            <person name="Lu W."/>
        </authorList>
    </citation>
    <scope>INTERACTION WITH SHISA7</scope>
</reference>
<feature type="signal peptide" evidence="4">
    <location>
        <begin position="1"/>
        <end position="27"/>
    </location>
</feature>
<feature type="chain" id="PRO_0000000429" description="Gamma-aminobutyric acid receptor subunit alpha-1">
    <location>
        <begin position="28"/>
        <end position="455"/>
    </location>
</feature>
<feature type="topological domain" description="Extracellular" evidence="14">
    <location>
        <begin position="28"/>
        <end position="252"/>
    </location>
</feature>
<feature type="transmembrane region" description="Helical" evidence="2">
    <location>
        <begin position="253"/>
        <end position="273"/>
    </location>
</feature>
<feature type="topological domain" description="Cytoplasmic" evidence="14">
    <location>
        <begin position="274"/>
        <end position="278"/>
    </location>
</feature>
<feature type="transmembrane region" description="Helical" evidence="2">
    <location>
        <begin position="279"/>
        <end position="300"/>
    </location>
</feature>
<feature type="topological domain" description="Extracellular" evidence="14">
    <location>
        <begin position="301"/>
        <end position="310"/>
    </location>
</feature>
<feature type="transmembrane region" description="Helical" evidence="2">
    <location>
        <begin position="311"/>
        <end position="332"/>
    </location>
</feature>
<feature type="topological domain" description="Cytoplasmic" evidence="14">
    <location>
        <begin position="333"/>
        <end position="420"/>
    </location>
</feature>
<feature type="transmembrane region" description="Helical" evidence="2">
    <location>
        <begin position="421"/>
        <end position="440"/>
    </location>
</feature>
<feature type="topological domain" description="Extracellular" evidence="14">
    <location>
        <begin position="441"/>
        <end position="455"/>
    </location>
</feature>
<feature type="binding site" evidence="2 3">
    <location>
        <position position="93"/>
    </location>
    <ligand>
        <name>4-aminobutanoate</name>
        <dbReference type="ChEBI" id="CHEBI:59888"/>
        <note>ligand shared with the neighboring beta subunit</note>
    </ligand>
</feature>
<feature type="binding site" evidence="3">
    <location>
        <position position="156"/>
    </location>
    <ligand>
        <name>4-aminobutanoate</name>
        <dbReference type="ChEBI" id="CHEBI:59888"/>
        <note>ligand shared with the neighboring beta subunit</note>
    </ligand>
</feature>
<feature type="glycosylation site" description="N-linked (GlcNAc...) asparagine" evidence="4">
    <location>
        <position position="37"/>
    </location>
</feature>
<feature type="glycosylation site" description="N-linked (GlcNAc...) asparagine" evidence="4">
    <location>
        <position position="137"/>
    </location>
</feature>
<feature type="disulfide bond" evidence="2">
    <location>
        <begin position="165"/>
        <end position="179"/>
    </location>
</feature>
<feature type="helix" evidence="18">
    <location>
        <begin position="37"/>
        <end position="48"/>
    </location>
</feature>
<feature type="turn" evidence="18">
    <location>
        <begin position="58"/>
        <end position="62"/>
    </location>
</feature>
<feature type="strand" evidence="18">
    <location>
        <begin position="65"/>
        <end position="80"/>
    </location>
</feature>
<feature type="turn" evidence="18">
    <location>
        <begin position="81"/>
        <end position="84"/>
    </location>
</feature>
<feature type="strand" evidence="18">
    <location>
        <begin position="85"/>
        <end position="97"/>
    </location>
</feature>
<feature type="strand" evidence="18">
    <location>
        <begin position="99"/>
        <end position="101"/>
    </location>
</feature>
<feature type="strand" evidence="18">
    <location>
        <begin position="108"/>
        <end position="112"/>
    </location>
</feature>
<feature type="helix" evidence="18">
    <location>
        <begin position="114"/>
        <end position="117"/>
    </location>
</feature>
<feature type="strand" evidence="18">
    <location>
        <begin position="125"/>
        <end position="127"/>
    </location>
</feature>
<feature type="strand" evidence="18">
    <location>
        <begin position="130"/>
        <end position="134"/>
    </location>
</feature>
<feature type="strand" evidence="18">
    <location>
        <begin position="138"/>
        <end position="140"/>
    </location>
</feature>
<feature type="strand" evidence="18">
    <location>
        <begin position="145"/>
        <end position="148"/>
    </location>
</feature>
<feature type="strand" evidence="18">
    <location>
        <begin position="151"/>
        <end position="154"/>
    </location>
</feature>
<feature type="strand" evidence="18">
    <location>
        <begin position="157"/>
        <end position="164"/>
    </location>
</feature>
<feature type="strand" evidence="18">
    <location>
        <begin position="176"/>
        <end position="179"/>
    </location>
</feature>
<feature type="strand" evidence="18">
    <location>
        <begin position="183"/>
        <end position="187"/>
    </location>
</feature>
<feature type="turn" evidence="18">
    <location>
        <begin position="190"/>
        <end position="192"/>
    </location>
</feature>
<feature type="strand" evidence="18">
    <location>
        <begin position="193"/>
        <end position="199"/>
    </location>
</feature>
<feature type="turn" evidence="18">
    <location>
        <begin position="201"/>
        <end position="204"/>
    </location>
</feature>
<feature type="strand" evidence="18">
    <location>
        <begin position="205"/>
        <end position="207"/>
    </location>
</feature>
<feature type="strand" evidence="18">
    <location>
        <begin position="215"/>
        <end position="230"/>
    </location>
</feature>
<feature type="strand" evidence="18">
    <location>
        <begin position="235"/>
        <end position="247"/>
    </location>
</feature>
<feature type="helix" evidence="17">
    <location>
        <begin position="250"/>
        <end position="255"/>
    </location>
</feature>
<feature type="helix" evidence="17">
    <location>
        <begin position="257"/>
        <end position="269"/>
    </location>
</feature>
<feature type="helix" evidence="17">
    <location>
        <begin position="270"/>
        <end position="272"/>
    </location>
</feature>
<feature type="helix" evidence="17">
    <location>
        <begin position="278"/>
        <end position="284"/>
    </location>
</feature>
<feature type="helix" evidence="17">
    <location>
        <begin position="287"/>
        <end position="300"/>
    </location>
</feature>
<feature type="helix" evidence="17">
    <location>
        <begin position="311"/>
        <end position="335"/>
    </location>
</feature>
<feature type="helix" evidence="17">
    <location>
        <begin position="417"/>
        <end position="441"/>
    </location>
</feature>
<keyword id="KW-0002">3D-structure</keyword>
<keyword id="KW-1003">Cell membrane</keyword>
<keyword id="KW-0868">Chloride</keyword>
<keyword id="KW-0869">Chloride channel</keyword>
<keyword id="KW-0968">Cytoplasmic vesicle</keyword>
<keyword id="KW-1015">Disulfide bond</keyword>
<keyword id="KW-0325">Glycoprotein</keyword>
<keyword id="KW-0407">Ion channel</keyword>
<keyword id="KW-0406">Ion transport</keyword>
<keyword id="KW-1071">Ligand-gated ion channel</keyword>
<keyword id="KW-0472">Membrane</keyword>
<keyword id="KW-0628">Postsynaptic cell membrane</keyword>
<keyword id="KW-0675">Receptor</keyword>
<keyword id="KW-1185">Reference proteome</keyword>
<keyword id="KW-0732">Signal</keyword>
<keyword id="KW-0770">Synapse</keyword>
<keyword id="KW-0812">Transmembrane</keyword>
<keyword id="KW-1133">Transmembrane helix</keyword>
<keyword id="KW-0813">Transport</keyword>
<gene>
    <name evidence="16" type="primary">Gabra1</name>
    <name type="synonym">Gabra-1</name>
</gene>